<protein>
    <recommendedName>
        <fullName>4-(gamma-L-glutamylamino)butanoyl-[BtrI acyl-carrier protein] monooxygenase BtrO</fullName>
        <ecNumber>1.14.14.13</ecNumber>
    </recommendedName>
    <alternativeName>
        <fullName>Butirosin biosynthesis protein V</fullName>
    </alternativeName>
</protein>
<sequence length="82" mass="9416">MDNKERNTLYQVVYAISGVTGEDGDELVETFKQGPMEVDKRDFFEIVQRVESLFDCTLDMNLEGPYLIHADEIVTKITKLNV</sequence>
<name>BTRV_NIACI</name>
<evidence type="ECO:0000269" key="1">
    <source>
    </source>
</evidence>
<accession>Q4H4E3</accession>
<organism>
    <name type="scientific">Niallia circulans</name>
    <name type="common">Bacillus circulans</name>
    <dbReference type="NCBI Taxonomy" id="1397"/>
    <lineage>
        <taxon>Bacteria</taxon>
        <taxon>Bacillati</taxon>
        <taxon>Bacillota</taxon>
        <taxon>Bacilli</taxon>
        <taxon>Bacillales</taxon>
        <taxon>Bacillaceae</taxon>
        <taxon>Niallia</taxon>
    </lineage>
</organism>
<dbReference type="EC" id="1.14.14.13"/>
<dbReference type="EMBL" id="AB097196">
    <property type="protein sequence ID" value="BAE07078.1"/>
    <property type="molecule type" value="Genomic_DNA"/>
</dbReference>
<dbReference type="SMR" id="Q4H4E3"/>
<dbReference type="UniPathway" id="UPA00964"/>
<dbReference type="GO" id="GO:0016712">
    <property type="term" value="F:oxidoreductase activity, acting on paired donors, with incorporation or reduction of molecular oxygen, reduced flavin or flavoprotein as one donor, and incorporation of one atom of oxygen"/>
    <property type="evidence" value="ECO:0000304"/>
    <property type="project" value="UniProtKB"/>
</dbReference>
<dbReference type="GO" id="GO:0017000">
    <property type="term" value="P:antibiotic biosynthetic process"/>
    <property type="evidence" value="ECO:0000314"/>
    <property type="project" value="UniProtKB"/>
</dbReference>
<dbReference type="GO" id="GO:0051289">
    <property type="term" value="P:protein homotetramerization"/>
    <property type="evidence" value="ECO:0000314"/>
    <property type="project" value="UniProtKB"/>
</dbReference>
<dbReference type="InterPro" id="IPR046135">
    <property type="entry name" value="DUF6137"/>
</dbReference>
<dbReference type="Pfam" id="PF19634">
    <property type="entry name" value="DUF6137"/>
    <property type="match status" value="1"/>
</dbReference>
<reference key="1">
    <citation type="journal article" date="2005" name="J. Antibiot.">
        <title>Extended sequence and functional analysis of the butirosin biosynthetic gene cluster in Bacillus circulans SANK 72073.</title>
        <authorList>
            <person name="Kudo F."/>
            <person name="Numakura M."/>
            <person name="Tamegai H."/>
            <person name="Yamamoto H."/>
            <person name="Eguchi T."/>
            <person name="Kakinuma K."/>
        </authorList>
    </citation>
    <scope>NUCLEOTIDE SEQUENCE [GENOMIC DNA]</scope>
    <source>
        <strain>ATCC 21557 / NCIMB 12336 / BU-1709-YQW-B6</strain>
    </source>
</reference>
<reference key="2">
    <citation type="journal article" date="2005" name="Chem. Biol.">
        <title>Biosynthesis of the unique amino acid side chain of butirosin: possible protective-group chemistry in an acyl carrier protein-mediated pathway.</title>
        <authorList>
            <person name="Li Y."/>
            <person name="Llewellyn N.M."/>
            <person name="Giri R."/>
            <person name="Huang F."/>
            <person name="Spencer J.B."/>
        </authorList>
    </citation>
    <scope>FUNCTION</scope>
    <scope>CATALYTIC ACTIVITY</scope>
    <scope>PATHWAY</scope>
    <scope>BIOPHYSICOCHEMICAL PROPERTIES</scope>
    <scope>SUBUNIT</scope>
    <source>
        <strain>ATCC 21557 / NCIMB 12336 / BU-1709-YQW-B6</strain>
    </source>
</reference>
<feature type="chain" id="PRO_0000421728" description="4-(gamma-L-glutamylamino)butanoyl-[BtrI acyl-carrier protein] monooxygenase BtrO">
    <location>
        <begin position="1"/>
        <end position="82"/>
    </location>
</feature>
<keyword id="KW-0045">Antibiotic biosynthesis</keyword>
<keyword id="KW-0285">Flavoprotein</keyword>
<keyword id="KW-0288">FMN</keyword>
<keyword id="KW-0560">Oxidoreductase</keyword>
<comment type="function">
    <text evidence="1">NAD(P)H:FMN oxidoreductase component of a two-component system involved in the biosynthesis of the side chain of the aminoglycoside antibiotics in the biosynthetic pathway of butirosin. Together with BtrO, mediates hydroxylation of gamma-L-Glu-GABA-S-BtrI.</text>
</comment>
<comment type="catalytic activity">
    <reaction evidence="1">
        <text>4-(gamma-L-glutamylamino)butanoyl-[BtrI ACP] + FMNH2 + O2 = 4-(gamma-L-glutamylamino)-(2S)-2-hydroxybutanoyl-[BtrI ACP] + FMN + H2O + H(+)</text>
        <dbReference type="Rhea" id="RHEA:53960"/>
        <dbReference type="Rhea" id="RHEA-COMP:13743"/>
        <dbReference type="Rhea" id="RHEA-COMP:13745"/>
        <dbReference type="ChEBI" id="CHEBI:15377"/>
        <dbReference type="ChEBI" id="CHEBI:15378"/>
        <dbReference type="ChEBI" id="CHEBI:15379"/>
        <dbReference type="ChEBI" id="CHEBI:57618"/>
        <dbReference type="ChEBI" id="CHEBI:58210"/>
        <dbReference type="ChEBI" id="CHEBI:137998"/>
        <dbReference type="ChEBI" id="CHEBI:137999"/>
        <dbReference type="EC" id="1.14.14.13"/>
    </reaction>
</comment>
<comment type="biophysicochemical properties">
    <kinetics>
        <KM evidence="1">6.86 uM for NADH in the presence of FMN</KM>
        <KM evidence="1">7.25 uM for NADH in the presence of FAD</KM>
        <text>kcat is 1243.13 min(-1) with NADH as substrate in the presence of FMN. kcat is 887.48 min(-1) with NADH as substrate in the presence of FAD.</text>
    </kinetics>
</comment>
<comment type="pathway">
    <text evidence="1">Antibiotic biosynthesis; butirosin biosynthesis.</text>
</comment>
<comment type="subunit">
    <text evidence="1">Homotetramer.</text>
</comment>
<gene>
    <name type="primary">btrV</name>
</gene>
<proteinExistence type="evidence at protein level"/>